<accession>Q890J1</accession>
<accession>F9US49</accession>
<feature type="chain" id="PRO_0000188712" description="1,4-alpha-glucan branching enzyme GlgB">
    <location>
        <begin position="1"/>
        <end position="634"/>
    </location>
</feature>
<feature type="active site" description="Nucleophile" evidence="1">
    <location>
        <position position="305"/>
    </location>
</feature>
<feature type="active site" description="Proton donor" evidence="1">
    <location>
        <position position="357"/>
    </location>
</feature>
<protein>
    <recommendedName>
        <fullName evidence="1">1,4-alpha-glucan branching enzyme GlgB</fullName>
        <ecNumber evidence="1">2.4.1.18</ecNumber>
    </recommendedName>
    <alternativeName>
        <fullName evidence="1">1,4-alpha-D-glucan:1,4-alpha-D-glucan 6-glucosyl-transferase</fullName>
    </alternativeName>
    <alternativeName>
        <fullName evidence="1">Alpha-(1-&gt;4)-glucan branching enzyme</fullName>
    </alternativeName>
    <alternativeName>
        <fullName evidence="1">Glycogen branching enzyme</fullName>
        <shortName evidence="1">BE</shortName>
    </alternativeName>
</protein>
<comment type="function">
    <text evidence="1">Catalyzes the formation of the alpha-1,6-glucosidic linkages in glycogen by scission of a 1,4-alpha-linked oligosaccharide from growing alpha-1,4-glucan chains and the subsequent attachment of the oligosaccharide to the alpha-1,6 position.</text>
</comment>
<comment type="catalytic activity">
    <reaction evidence="1">
        <text>Transfers a segment of a (1-&gt;4)-alpha-D-glucan chain to a primary hydroxy group in a similar glucan chain.</text>
        <dbReference type="EC" id="2.4.1.18"/>
    </reaction>
</comment>
<comment type="pathway">
    <text evidence="1">Glycan biosynthesis; glycogen biosynthesis.</text>
</comment>
<comment type="subunit">
    <text evidence="1">Monomer.</text>
</comment>
<comment type="similarity">
    <text evidence="1">Belongs to the glycosyl hydrolase 13 family. GlgB subfamily.</text>
</comment>
<keyword id="KW-0119">Carbohydrate metabolism</keyword>
<keyword id="KW-0320">Glycogen biosynthesis</keyword>
<keyword id="KW-0321">Glycogen metabolism</keyword>
<keyword id="KW-0328">Glycosyltransferase</keyword>
<keyword id="KW-1185">Reference proteome</keyword>
<keyword id="KW-0808">Transferase</keyword>
<dbReference type="EC" id="2.4.1.18" evidence="1"/>
<dbReference type="EMBL" id="AL935263">
    <property type="protein sequence ID" value="CCC77596.1"/>
    <property type="molecule type" value="Genomic_DNA"/>
</dbReference>
<dbReference type="RefSeq" id="YP_004888110.1">
    <property type="nucleotide sequence ID" value="NC_004567.2"/>
</dbReference>
<dbReference type="SMR" id="Q890J1"/>
<dbReference type="STRING" id="220668.lp_0020"/>
<dbReference type="CAZy" id="CBM48">
    <property type="family name" value="Carbohydrate-Binding Module Family 48"/>
</dbReference>
<dbReference type="CAZy" id="GH13">
    <property type="family name" value="Glycoside Hydrolase Family 13"/>
</dbReference>
<dbReference type="EnsemblBacteria" id="CCC77596">
    <property type="protein sequence ID" value="CCC77596"/>
    <property type="gene ID" value="lp_0020"/>
</dbReference>
<dbReference type="KEGG" id="lpl:lp_0020"/>
<dbReference type="PATRIC" id="fig|220668.9.peg.18"/>
<dbReference type="eggNOG" id="COG0296">
    <property type="taxonomic scope" value="Bacteria"/>
</dbReference>
<dbReference type="HOGENOM" id="CLU_004245_3_2_9"/>
<dbReference type="OrthoDB" id="9800174at2"/>
<dbReference type="PhylomeDB" id="Q890J1"/>
<dbReference type="UniPathway" id="UPA00164"/>
<dbReference type="Proteomes" id="UP000000432">
    <property type="component" value="Chromosome"/>
</dbReference>
<dbReference type="GO" id="GO:0005829">
    <property type="term" value="C:cytosol"/>
    <property type="evidence" value="ECO:0007669"/>
    <property type="project" value="TreeGrafter"/>
</dbReference>
<dbReference type="GO" id="GO:0003844">
    <property type="term" value="F:1,4-alpha-glucan branching enzyme activity"/>
    <property type="evidence" value="ECO:0007669"/>
    <property type="project" value="UniProtKB-UniRule"/>
</dbReference>
<dbReference type="GO" id="GO:0043169">
    <property type="term" value="F:cation binding"/>
    <property type="evidence" value="ECO:0007669"/>
    <property type="project" value="InterPro"/>
</dbReference>
<dbReference type="GO" id="GO:0004553">
    <property type="term" value="F:hydrolase activity, hydrolyzing O-glycosyl compounds"/>
    <property type="evidence" value="ECO:0007669"/>
    <property type="project" value="InterPro"/>
</dbReference>
<dbReference type="GO" id="GO:0005978">
    <property type="term" value="P:glycogen biosynthetic process"/>
    <property type="evidence" value="ECO:0007669"/>
    <property type="project" value="UniProtKB-UniRule"/>
</dbReference>
<dbReference type="CDD" id="cd11322">
    <property type="entry name" value="AmyAc_Glg_BE"/>
    <property type="match status" value="1"/>
</dbReference>
<dbReference type="CDD" id="cd02855">
    <property type="entry name" value="E_set_GBE_prok_N"/>
    <property type="match status" value="1"/>
</dbReference>
<dbReference type="FunFam" id="3.20.20.80:FF:000003">
    <property type="entry name" value="1,4-alpha-glucan branching enzyme GlgB"/>
    <property type="match status" value="1"/>
</dbReference>
<dbReference type="Gene3D" id="3.20.20.80">
    <property type="entry name" value="Glycosidases"/>
    <property type="match status" value="1"/>
</dbReference>
<dbReference type="Gene3D" id="2.60.40.1180">
    <property type="entry name" value="Golgi alpha-mannosidase II"/>
    <property type="match status" value="1"/>
</dbReference>
<dbReference type="Gene3D" id="2.60.40.10">
    <property type="entry name" value="Immunoglobulins"/>
    <property type="match status" value="1"/>
</dbReference>
<dbReference type="HAMAP" id="MF_00685">
    <property type="entry name" value="GlgB"/>
    <property type="match status" value="1"/>
</dbReference>
<dbReference type="InterPro" id="IPR006048">
    <property type="entry name" value="A-amylase/branching_C"/>
</dbReference>
<dbReference type="InterPro" id="IPR037439">
    <property type="entry name" value="Branching_enzy"/>
</dbReference>
<dbReference type="InterPro" id="IPR006407">
    <property type="entry name" value="GlgB"/>
</dbReference>
<dbReference type="InterPro" id="IPR044143">
    <property type="entry name" value="GlgB_N_E_set_prok"/>
</dbReference>
<dbReference type="InterPro" id="IPR006047">
    <property type="entry name" value="Glyco_hydro_13_cat_dom"/>
</dbReference>
<dbReference type="InterPro" id="IPR004193">
    <property type="entry name" value="Glyco_hydro_13_N"/>
</dbReference>
<dbReference type="InterPro" id="IPR013780">
    <property type="entry name" value="Glyco_hydro_b"/>
</dbReference>
<dbReference type="InterPro" id="IPR017853">
    <property type="entry name" value="Glycoside_hydrolase_SF"/>
</dbReference>
<dbReference type="InterPro" id="IPR013783">
    <property type="entry name" value="Ig-like_fold"/>
</dbReference>
<dbReference type="NCBIfam" id="TIGR01515">
    <property type="entry name" value="branching_enzym"/>
    <property type="match status" value="1"/>
</dbReference>
<dbReference type="NCBIfam" id="NF003811">
    <property type="entry name" value="PRK05402.1"/>
    <property type="match status" value="1"/>
</dbReference>
<dbReference type="NCBIfam" id="NF008967">
    <property type="entry name" value="PRK12313.1"/>
    <property type="match status" value="1"/>
</dbReference>
<dbReference type="PANTHER" id="PTHR43651">
    <property type="entry name" value="1,4-ALPHA-GLUCAN-BRANCHING ENZYME"/>
    <property type="match status" value="1"/>
</dbReference>
<dbReference type="PANTHER" id="PTHR43651:SF3">
    <property type="entry name" value="1,4-ALPHA-GLUCAN-BRANCHING ENZYME"/>
    <property type="match status" value="1"/>
</dbReference>
<dbReference type="Pfam" id="PF00128">
    <property type="entry name" value="Alpha-amylase"/>
    <property type="match status" value="2"/>
</dbReference>
<dbReference type="Pfam" id="PF02806">
    <property type="entry name" value="Alpha-amylase_C"/>
    <property type="match status" value="1"/>
</dbReference>
<dbReference type="Pfam" id="PF02922">
    <property type="entry name" value="CBM_48"/>
    <property type="match status" value="1"/>
</dbReference>
<dbReference type="PIRSF" id="PIRSF000463">
    <property type="entry name" value="GlgB"/>
    <property type="match status" value="1"/>
</dbReference>
<dbReference type="SMART" id="SM00642">
    <property type="entry name" value="Aamy"/>
    <property type="match status" value="1"/>
</dbReference>
<dbReference type="SUPFAM" id="SSF51445">
    <property type="entry name" value="(Trans)glycosidases"/>
    <property type="match status" value="1"/>
</dbReference>
<dbReference type="SUPFAM" id="SSF51011">
    <property type="entry name" value="Glycosyl hydrolase domain"/>
    <property type="match status" value="1"/>
</dbReference>
<gene>
    <name evidence="1" type="primary">glgB</name>
    <name type="ordered locus">lp_0020</name>
</gene>
<organism>
    <name type="scientific">Lactiplantibacillus plantarum (strain ATCC BAA-793 / NCIMB 8826 / WCFS1)</name>
    <name type="common">Lactobacillus plantarum</name>
    <dbReference type="NCBI Taxonomy" id="220668"/>
    <lineage>
        <taxon>Bacteria</taxon>
        <taxon>Bacillati</taxon>
        <taxon>Bacillota</taxon>
        <taxon>Bacilli</taxon>
        <taxon>Lactobacillales</taxon>
        <taxon>Lactobacillaceae</taxon>
        <taxon>Lactiplantibacillus</taxon>
    </lineage>
</organism>
<proteinExistence type="inferred from homology"/>
<sequence length="634" mass="72981">MVKQTTEMNDASYLFNTGAGFNSQDYLGCHLAASGRAVFRVWAPHAKAVGVVGDFNDWQPSALKLLGATGIWQGQVPNVHAGQLYKFQITTPTGQVQLKIDPFAQQFERKPGDAAVVVEPMTMRWHDSLWLARRKKSRAANRPINIYEVHLGSWRRHLDGSYYTYAELAAELIPYVKQRGYTHIELMPVMEHLLDASWGYQQLGYFAPTSRFGKRDSFLSFVDQCHQANIGVFVDWVPGHFIRNYDALYQYDGTPTFEYADPERANNRRWGAWNFDLGKTQVQSFLISSAEYWLDQCHLDGLRVDAVSNMLYCDYDEGREGQVNQYGDNRNLEGIAFLQKLNTTVLTHHPDILMIAEESSAYPQVTGSVANGGLGFNYKWNMGWMHDTLDFFMMDPLYRHDHFNLLTFAFVYMFDERFILPFSHDEVVHGKKSLMHKMSGDRYNQFANLRTMLTYMAAFPGKQLNFMGSEWGQFLEWRDWSALEWVDLKDDLNHRMQQFTTQLNAVYRHNRPLWEQDHDPAGIIYTHTDDPDSSTMGFIRQAKRKYSFVVAAFNFVPVERQDYRIGVPYRGRYELLLNTEAQAFGGTWTKLETTFTAVDKPYRGQPASFTVTLPAMGALLIRPVKVIGGVKHAR</sequence>
<name>GLGB_LACPL</name>
<evidence type="ECO:0000255" key="1">
    <source>
        <dbReference type="HAMAP-Rule" id="MF_00685"/>
    </source>
</evidence>
<reference key="1">
    <citation type="journal article" date="2003" name="Proc. Natl. Acad. Sci. U.S.A.">
        <title>Complete genome sequence of Lactobacillus plantarum WCFS1.</title>
        <authorList>
            <person name="Kleerebezem M."/>
            <person name="Boekhorst J."/>
            <person name="van Kranenburg R."/>
            <person name="Molenaar D."/>
            <person name="Kuipers O.P."/>
            <person name="Leer R."/>
            <person name="Tarchini R."/>
            <person name="Peters S.A."/>
            <person name="Sandbrink H.M."/>
            <person name="Fiers M.W.E.J."/>
            <person name="Stiekema W."/>
            <person name="Klein Lankhorst R.M."/>
            <person name="Bron P.A."/>
            <person name="Hoffer S.M."/>
            <person name="Nierop Groot M.N."/>
            <person name="Kerkhoven R."/>
            <person name="De Vries M."/>
            <person name="Ursing B."/>
            <person name="De Vos W.M."/>
            <person name="Siezen R.J."/>
        </authorList>
    </citation>
    <scope>NUCLEOTIDE SEQUENCE [LARGE SCALE GENOMIC DNA]</scope>
    <source>
        <strain>ATCC BAA-793 / NCIMB 8826 / WCFS1</strain>
    </source>
</reference>
<reference key="2">
    <citation type="journal article" date="2012" name="J. Bacteriol.">
        <title>Complete resequencing and reannotation of the Lactobacillus plantarum WCFS1 genome.</title>
        <authorList>
            <person name="Siezen R.J."/>
            <person name="Francke C."/>
            <person name="Renckens B."/>
            <person name="Boekhorst J."/>
            <person name="Wels M."/>
            <person name="Kleerebezem M."/>
            <person name="van Hijum S.A."/>
        </authorList>
    </citation>
    <scope>NUCLEOTIDE SEQUENCE [LARGE SCALE GENOMIC DNA]</scope>
    <scope>GENOME REANNOTATION</scope>
    <source>
        <strain>ATCC BAA-793 / NCIMB 8826 / WCFS1</strain>
    </source>
</reference>